<protein>
    <recommendedName>
        <fullName>Protein PAT1 homolog 2</fullName>
    </recommendedName>
    <alternativeName>
        <fullName>PAT1-like protein 2</fullName>
    </alternativeName>
    <alternativeName>
        <fullName>Protein P100</fullName>
    </alternativeName>
    <alternativeName>
        <fullName>Protein PAT1 homolog a</fullName>
        <shortName>Pat1a</shortName>
        <shortName>XPat1a</shortName>
    </alternativeName>
</protein>
<organism>
    <name type="scientific">Xenopus laevis</name>
    <name type="common">African clawed frog</name>
    <dbReference type="NCBI Taxonomy" id="8355"/>
    <lineage>
        <taxon>Eukaryota</taxon>
        <taxon>Metazoa</taxon>
        <taxon>Chordata</taxon>
        <taxon>Craniata</taxon>
        <taxon>Vertebrata</taxon>
        <taxon>Euteleostomi</taxon>
        <taxon>Amphibia</taxon>
        <taxon>Batrachia</taxon>
        <taxon>Anura</taxon>
        <taxon>Pipoidea</taxon>
        <taxon>Pipidae</taxon>
        <taxon>Xenopodinae</taxon>
        <taxon>Xenopus</taxon>
        <taxon>Xenopus</taxon>
    </lineage>
</organism>
<accession>Q4V7K4</accession>
<accession>Q789A7</accession>
<accession>Q91817</accession>
<accession>Q91818</accession>
<keyword id="KW-0963">Cytoplasm</keyword>
<keyword id="KW-0903">Direct protein sequencing</keyword>
<keyword id="KW-0539">Nucleus</keyword>
<keyword id="KW-1185">Reference proteome</keyword>
<keyword id="KW-0694">RNA-binding</keyword>
<dbReference type="EMBL" id="M76720">
    <property type="protein sequence ID" value="AAA49921.1"/>
    <property type="molecule type" value="mRNA"/>
</dbReference>
<dbReference type="EMBL" id="M76721">
    <property type="protein sequence ID" value="AAA49922.1"/>
    <property type="molecule type" value="mRNA"/>
</dbReference>
<dbReference type="EMBL" id="BC097860">
    <property type="protein sequence ID" value="AAH97860.1"/>
    <property type="molecule type" value="mRNA"/>
</dbReference>
<dbReference type="PIR" id="S23468">
    <property type="entry name" value="S23468"/>
</dbReference>
<dbReference type="RefSeq" id="NP_001085311.1">
    <property type="nucleotide sequence ID" value="NM_001091842.1"/>
</dbReference>
<dbReference type="SMR" id="Q4V7K4"/>
<dbReference type="BioGRID" id="101894">
    <property type="interactions" value="9"/>
</dbReference>
<dbReference type="IntAct" id="Q4V7K4">
    <property type="interactions" value="1"/>
</dbReference>
<dbReference type="DNASU" id="443730"/>
<dbReference type="GeneID" id="443730"/>
<dbReference type="KEGG" id="xla:443730"/>
<dbReference type="AGR" id="Xenbase:XB-GENE-5892260"/>
<dbReference type="CTD" id="443730"/>
<dbReference type="Xenbase" id="XB-GENE-5892260">
    <property type="gene designation" value="patl2.L"/>
</dbReference>
<dbReference type="OrthoDB" id="8251691at2759"/>
<dbReference type="CD-CODE" id="78E86D56">
    <property type="entry name" value="Mitochondrial cloud"/>
</dbReference>
<dbReference type="Proteomes" id="UP000186698">
    <property type="component" value="Chromosome 2L"/>
</dbReference>
<dbReference type="Bgee" id="443730">
    <property type="expression patterns" value="Expressed in ovary and 7 other cell types or tissues"/>
</dbReference>
<dbReference type="GO" id="GO:0005737">
    <property type="term" value="C:cytoplasm"/>
    <property type="evidence" value="ECO:0000314"/>
    <property type="project" value="UniProtKB"/>
</dbReference>
<dbReference type="GO" id="GO:0005634">
    <property type="term" value="C:nucleus"/>
    <property type="evidence" value="ECO:0000314"/>
    <property type="project" value="UniProtKB"/>
</dbReference>
<dbReference type="GO" id="GO:0000932">
    <property type="term" value="C:P-body"/>
    <property type="evidence" value="ECO:0000314"/>
    <property type="project" value="MGI"/>
</dbReference>
<dbReference type="GO" id="GO:1990904">
    <property type="term" value="C:ribonucleoprotein complex"/>
    <property type="evidence" value="ECO:0000353"/>
    <property type="project" value="UniProtKB"/>
</dbReference>
<dbReference type="GO" id="GO:0002151">
    <property type="term" value="F:G-quadruplex RNA binding"/>
    <property type="evidence" value="ECO:0000314"/>
    <property type="project" value="MGI"/>
</dbReference>
<dbReference type="GO" id="GO:0034046">
    <property type="term" value="F:poly(G) binding"/>
    <property type="evidence" value="ECO:0000314"/>
    <property type="project" value="MGI"/>
</dbReference>
<dbReference type="GO" id="GO:0008266">
    <property type="term" value="F:poly(U) RNA binding"/>
    <property type="evidence" value="ECO:0000314"/>
    <property type="project" value="MGI"/>
</dbReference>
<dbReference type="GO" id="GO:0003723">
    <property type="term" value="F:RNA binding"/>
    <property type="evidence" value="ECO:0000314"/>
    <property type="project" value="UniProtKB"/>
</dbReference>
<dbReference type="GO" id="GO:0030371">
    <property type="term" value="F:translation repressor activity"/>
    <property type="evidence" value="ECO:0000314"/>
    <property type="project" value="MGI"/>
</dbReference>
<dbReference type="GO" id="GO:0000290">
    <property type="term" value="P:deadenylation-dependent decapping of nuclear-transcribed mRNA"/>
    <property type="evidence" value="ECO:0000318"/>
    <property type="project" value="GO_Central"/>
</dbReference>
<dbReference type="GO" id="GO:0010607">
    <property type="term" value="P:negative regulation of cytoplasmic mRNA processing body assembly"/>
    <property type="evidence" value="ECO:0000304"/>
    <property type="project" value="UniProtKB"/>
</dbReference>
<dbReference type="GO" id="GO:0017148">
    <property type="term" value="P:negative regulation of translation"/>
    <property type="evidence" value="ECO:0000314"/>
    <property type="project" value="UniProtKB"/>
</dbReference>
<dbReference type="GO" id="GO:0033962">
    <property type="term" value="P:P-body assembly"/>
    <property type="evidence" value="ECO:0000318"/>
    <property type="project" value="GO_Central"/>
</dbReference>
<dbReference type="InterPro" id="IPR039900">
    <property type="entry name" value="Pat1-like"/>
</dbReference>
<dbReference type="InterPro" id="IPR019167">
    <property type="entry name" value="PAT1_dom"/>
</dbReference>
<dbReference type="PANTHER" id="PTHR21551:SF3">
    <property type="entry name" value="PROTEIN PAT1 HOMOLOG 2"/>
    <property type="match status" value="1"/>
</dbReference>
<dbReference type="PANTHER" id="PTHR21551">
    <property type="entry name" value="TOPOISOMERASE II-ASSOCIATED PROTEIN PAT1"/>
    <property type="match status" value="1"/>
</dbReference>
<dbReference type="Pfam" id="PF09770">
    <property type="entry name" value="PAT1"/>
    <property type="match status" value="1"/>
</dbReference>
<evidence type="ECO:0000256" key="1">
    <source>
        <dbReference type="SAM" id="MobiDB-lite"/>
    </source>
</evidence>
<evidence type="ECO:0000269" key="2">
    <source>
    </source>
</evidence>
<evidence type="ECO:0000269" key="3">
    <source>
    </source>
</evidence>
<evidence type="ECO:0000269" key="4">
    <source>
    </source>
</evidence>
<evidence type="ECO:0000269" key="5">
    <source>
    </source>
</evidence>
<evidence type="ECO:0000305" key="6"/>
<sequence>MNLGSEQILPEDFYLAEEGALLEEMAEEDEEIDLYNEVTFGLDQESDEEPVKLEDDHTKPIQMPEAPKEEEPEALQPVKEAKGSEKAPLHEVKIVVEPHEDHVDLSIDSGGHTMNSTMDDSELGDPAVMKAFHGKPTLESLDSAVVDSGIGSTWSELDTDYDQSGMDSGLWEASPKVSTYATGQILEDKAILRIMERAPYLPPTNLEFLGSPLQRGFMPSQRLQGPEMGAMSPKPYRPRFMRQQSPLVPRSMRPSYPFTPPRRGPSVFAPNQSPGFVSQTPFRPMSPNVSTPTRPMTPKMVRMHFGPMSPSPSFSPFFSPMGNALQRFKVPGHVTQLHPQHRRILSQRQRPQSSSRRQWESRPDPYASLMSQKEKEWVIKLQMIQLQSENPHLDDYYYQAYYENLERKLSEEEFLGERKKREPTKLVTPYIQKAETYESVVHIEGSLGQVAVSTCYSPRRAIDAVSYAMPDEAIKALGYQRLRVLKHAEKVFLMFLEVEELARKMSHIPEEEHVHFQHKQNYKVQRIYDVLKIAPCHNEEESEFLQLLQVGKGKKLVARLLPFLRSEQAREILLLVVQHLTFLIKNDSAEESLSVLYGPLKTIINGLSFTELIGVTQELTRPLPESNDLPLTLAFQNQFGISLLYCLLSHGERLLSSDLPMEPCIGDFEKWTDTVFLVAKELSHVSKSSMVEPLFLPSNLLSLFCRYLDKQTIHKLEDKMECPVIPPYTAVPS</sequence>
<feature type="chain" id="PRO_0000404579" description="Protein PAT1 homolog 2">
    <location>
        <begin position="1"/>
        <end position="733"/>
    </location>
</feature>
<feature type="region of interest" description="Disordered" evidence="1">
    <location>
        <begin position="42"/>
        <end position="75"/>
    </location>
</feature>
<feature type="region of interest" description="Disordered" evidence="1">
    <location>
        <begin position="337"/>
        <end position="366"/>
    </location>
</feature>
<feature type="compositionally biased region" description="Basic and acidic residues" evidence="1">
    <location>
        <begin position="49"/>
        <end position="59"/>
    </location>
</feature>
<feature type="compositionally biased region" description="Low complexity" evidence="1">
    <location>
        <begin position="346"/>
        <end position="356"/>
    </location>
</feature>
<feature type="sequence conflict" description="In Ref. 1; AAA49921/AAA49922." evidence="6" ref="1">
    <original>V</original>
    <variation>W</variation>
    <location>
        <position position="38"/>
    </location>
</feature>
<feature type="sequence conflict" description="In Ref. 1; AAA49922." evidence="6" ref="1">
    <original>T</original>
    <variation>P</variation>
    <location>
        <position position="602"/>
    </location>
</feature>
<feature type="sequence conflict" description="In Ref. 1; AAA49921." evidence="6" ref="1">
    <original>I</original>
    <variation>F</variation>
    <location>
        <position position="604"/>
    </location>
</feature>
<reference key="1">
    <citation type="journal article" date="1992" name="Eur. J. Biochem.">
        <title>Purification, primary structure, bacterial expression and subcellular distribution of an oocyte-specific protein in Xenopus.</title>
        <authorList>
            <person name="Rother R.P."/>
            <person name="Frank M.B."/>
            <person name="Thomas P.S."/>
        </authorList>
    </citation>
    <scope>NUCLEOTIDE SEQUENCE [MRNA]</scope>
    <scope>PROTEIN SEQUENCE OF 381-406; 410-419 AND 505-519</scope>
    <scope>SUBCELLULAR LOCATION</scope>
    <scope>TISSUE SPECIFICITY</scope>
    <source>
        <tissue>Ovary</tissue>
    </source>
</reference>
<reference key="2">
    <citation type="submission" date="2005-06" db="EMBL/GenBank/DDBJ databases">
        <authorList>
            <consortium name="NIH - Xenopus Gene Collection (XGC) project"/>
        </authorList>
    </citation>
    <scope>NUCLEOTIDE SEQUENCE [LARGE SCALE MRNA]</scope>
    <source>
        <tissue>Oocyte</tissue>
    </source>
</reference>
<reference key="3">
    <citation type="journal article" date="2007" name="J. Biol. Chem.">
        <title>CPEB interacts with an ovary-specific eIF4E and 4E-T in early Xenopus oocytes.</title>
        <authorList>
            <person name="Minshall N."/>
            <person name="Reiter M.H."/>
            <person name="Weil D."/>
            <person name="Standart N."/>
        </authorList>
    </citation>
    <scope>INTERACTION WITH CPEB</scope>
</reference>
<reference key="4">
    <citation type="journal article" date="2010" name="Dev. Biol.">
        <title>Translational repression by the oocyte-specific protein P100 in Xenopus.</title>
        <authorList>
            <person name="Nakamura Y."/>
            <person name="Tanaka K.J."/>
            <person name="Miyauchi M."/>
            <person name="Huang L."/>
            <person name="Tsujimoto M."/>
            <person name="Matsumoto K."/>
        </authorList>
    </citation>
    <scope>FUNCTION</scope>
    <scope>RNA-BINDING</scope>
    <scope>SUBCELLULAR LOCATION</scope>
    <scope>DEVELOPMENTAL STAGE</scope>
</reference>
<reference key="5">
    <citation type="journal article" date="2010" name="RNA">
        <title>Distinct functions of maternal and somatic Pat1 protein paralogs.</title>
        <authorList>
            <person name="Marnef A."/>
            <person name="Maldonado M."/>
            <person name="Bugaut A."/>
            <person name="Balasubramanian S."/>
            <person name="Kress M."/>
            <person name="Weil D."/>
            <person name="Standart N."/>
        </authorList>
    </citation>
    <scope>FUNCTION</scope>
    <scope>RNA-BINDING</scope>
    <scope>SUBCELLULAR LOCATION</scope>
    <scope>INTERACTION WITH RIBONUCLEOPROTEIN COMPLEX</scope>
    <scope>TISSUE SPECIFICITY</scope>
</reference>
<comment type="function">
    <text evidence="4 5">RNA-binding protein that acts as a translational repressor. When overexpressed, able to disperse P-bodies.</text>
</comment>
<comment type="subunit">
    <text evidence="3 5">Interacts with ribonucleoprotein complex components. Interacts with cpeb.</text>
</comment>
<comment type="subcellular location">
    <subcellularLocation>
        <location evidence="2">Cytoplasm</location>
    </subcellularLocation>
    <subcellularLocation>
        <location evidence="5">Nucleus</location>
    </subcellularLocation>
</comment>
<comment type="tissue specificity">
    <text evidence="2 5">Oocyte-specific protein. Expressed throughout oogenesis but is not detectable in eggs, embryos, nor in adult tissues (at protein level).</text>
</comment>
<comment type="developmental stage">
    <text evidence="4">Already expressed in the smallest stage I oocytes. Then it decreases during oocyte growth until stage VI (at protein level).</text>
</comment>
<comment type="similarity">
    <text evidence="6">Belongs to the PAT1 family.</text>
</comment>
<proteinExistence type="evidence at protein level"/>
<gene>
    <name type="primary">patl2</name>
</gene>
<name>PATL2_XENLA</name>